<protein>
    <recommendedName>
        <fullName>TonB-dependent heme receptor A</fullName>
    </recommendedName>
</protein>
<evidence type="ECO:0000255" key="1"/>
<evidence type="ECO:0000255" key="2">
    <source>
        <dbReference type="PROSITE-ProRule" id="PRU01360"/>
    </source>
</evidence>
<evidence type="ECO:0000269" key="3">
    <source>
    </source>
</evidence>
<evidence type="ECO:0000305" key="4"/>
<comment type="function">
    <text evidence="3">Heme receptor.</text>
</comment>
<comment type="subcellular location">
    <subcellularLocation>
        <location evidence="2">Cell outer membrane</location>
        <topology evidence="2">Multi-pass membrane protein</topology>
    </subcellularLocation>
</comment>
<comment type="induction">
    <text>Expressed only under condition of low heme concentration.</text>
</comment>
<comment type="similarity">
    <text evidence="4">Belongs to the TonB-dependent receptor family.</text>
</comment>
<proteinExistence type="evidence at transcript level"/>
<sequence>MKMKKQCATLTFFIGLHGYTIAEDNPKNISLSVITVPGHHERQPDRSIITQNEIDQKQSDNVADLVNTVPGVSMAGGFRPSGQTLNIRGMGDTEDIRVQVDGATKNFEKYQQGSLFIEPELLRRVSIDKGNHYPQYGNGGFAGTIKLETKNAKDFLQENQLLGGLLKYGYNTNNNQRTFSGAIFMQNDQKNIDALVYATVRRAHDYKRADKTPIKYSANNQANFLAKVNWWLTPSQLLAFSKVHGNHNGWEPFAAKRDLLPGPTEAEITKYGLDLAWKRKLVAREQQDRSYSLQYQFLPENNPWINTVAQLSHSSTYQHDTRSEQASKTYLASLGNESWTRYTDLTFDVNNTSLFNVAKTSHTLLVGLQWVKHKRQTLIFDPSKLQKAEYNHGYFQPSYMPSGHQYTHAFYAQDKIKIHNLTVSIGARYDYVKNIGKPNIATIYNDPTAGHDYSSKHYPGWSSYLGLNYKLTPYLNLFSNISNTWRAPVIDEQYETQYAKATLSPTASSLDLKKERITQLRVGKQIHFDHILSNNDQLSFNSTFFYYKGKDEIFKTRGVRCFESAQNNNNEVCSKKIGNYRNLPGYQIKGFELEANYDSTYWFTNLSYSHTIGKRLASPRNPWLASTSWIAEIPPRKAVVTLGSHIPDTNLTLGWKSEFVRRQDRSPTDQDKDAGHWALPKSSGYALHGIFATWQPKQIKHLRIQFTVDNLLNRSYRPYLSELAAGTGRNIKLSISKQF</sequence>
<keyword id="KW-0998">Cell outer membrane</keyword>
<keyword id="KW-0472">Membrane</keyword>
<keyword id="KW-0675">Receptor</keyword>
<keyword id="KW-1185">Reference proteome</keyword>
<keyword id="KW-0732">Signal</keyword>
<keyword id="KW-0798">TonB box</keyword>
<keyword id="KW-0812">Transmembrane</keyword>
<keyword id="KW-1134">Transmembrane beta strand</keyword>
<keyword id="KW-0813">Transport</keyword>
<gene>
    <name type="primary">tdhA</name>
    <name type="ordered locus">HD_0388</name>
</gene>
<name>TDHA_HAEDU</name>
<feature type="signal peptide" evidence="1">
    <location>
        <begin position="1"/>
        <end position="22"/>
    </location>
</feature>
<feature type="chain" id="PRO_0000230229" description="TonB-dependent heme receptor A">
    <location>
        <begin position="23"/>
        <end position="739"/>
    </location>
</feature>
<feature type="domain" description="TBDR plug" evidence="2">
    <location>
        <begin position="38"/>
        <end position="150"/>
    </location>
</feature>
<feature type="domain" description="TBDR beta-barrel" evidence="2">
    <location>
        <begin position="161"/>
        <end position="739"/>
    </location>
</feature>
<feature type="sequence conflict" description="In Ref. 1; AAC35765." evidence="4" ref="1">
    <original>Q</original>
    <variation>P</variation>
    <location>
        <position position="376"/>
    </location>
</feature>
<accession>Q7VNU1</accession>
<accession>O87381</accession>
<dbReference type="EMBL" id="AF052977">
    <property type="protein sequence ID" value="AAC35765.1"/>
    <property type="molecule type" value="Genomic_DNA"/>
</dbReference>
<dbReference type="EMBL" id="AE017143">
    <property type="protein sequence ID" value="AAP95357.1"/>
    <property type="molecule type" value="Genomic_DNA"/>
</dbReference>
<dbReference type="RefSeq" id="WP_010944410.1">
    <property type="nucleotide sequence ID" value="NC_002940.2"/>
</dbReference>
<dbReference type="SMR" id="Q7VNU1"/>
<dbReference type="STRING" id="233412.HD_0388"/>
<dbReference type="KEGG" id="hdu:HD_0388"/>
<dbReference type="eggNOG" id="COG1629">
    <property type="taxonomic scope" value="Bacteria"/>
</dbReference>
<dbReference type="HOGENOM" id="CLU_008287_19_3_6"/>
<dbReference type="OrthoDB" id="9760494at2"/>
<dbReference type="Proteomes" id="UP000001022">
    <property type="component" value="Chromosome"/>
</dbReference>
<dbReference type="GO" id="GO:0009279">
    <property type="term" value="C:cell outer membrane"/>
    <property type="evidence" value="ECO:0007669"/>
    <property type="project" value="UniProtKB-SubCell"/>
</dbReference>
<dbReference type="GO" id="GO:0015232">
    <property type="term" value="F:heme transmembrane transporter activity"/>
    <property type="evidence" value="ECO:0007669"/>
    <property type="project" value="InterPro"/>
</dbReference>
<dbReference type="GO" id="GO:0033214">
    <property type="term" value="P:siderophore-dependent iron import into cell"/>
    <property type="evidence" value="ECO:0007669"/>
    <property type="project" value="TreeGrafter"/>
</dbReference>
<dbReference type="CDD" id="cd01347">
    <property type="entry name" value="ligand_gated_channel"/>
    <property type="match status" value="1"/>
</dbReference>
<dbReference type="Gene3D" id="2.40.170.20">
    <property type="entry name" value="TonB-dependent receptor, beta-barrel domain"/>
    <property type="match status" value="1"/>
</dbReference>
<dbReference type="Gene3D" id="2.170.130.10">
    <property type="entry name" value="TonB-dependent receptor, plug domain"/>
    <property type="match status" value="1"/>
</dbReference>
<dbReference type="InterPro" id="IPR012910">
    <property type="entry name" value="Plug_dom"/>
</dbReference>
<dbReference type="InterPro" id="IPR037066">
    <property type="entry name" value="Plug_dom_sf"/>
</dbReference>
<dbReference type="InterPro" id="IPR039426">
    <property type="entry name" value="TonB-dep_rcpt-like"/>
</dbReference>
<dbReference type="InterPro" id="IPR000531">
    <property type="entry name" value="TonB-dep_rcpt_b-brl"/>
</dbReference>
<dbReference type="InterPro" id="IPR011276">
    <property type="entry name" value="TonB_haem/Hb_rcpt"/>
</dbReference>
<dbReference type="InterPro" id="IPR010949">
    <property type="entry name" value="TonB_Hb/transfer/lactofer_rcpt"/>
</dbReference>
<dbReference type="InterPro" id="IPR036942">
    <property type="entry name" value="TonB_rcpt_b-brl_sf"/>
</dbReference>
<dbReference type="NCBIfam" id="TIGR01785">
    <property type="entry name" value="TonB-hemin"/>
    <property type="match status" value="1"/>
</dbReference>
<dbReference type="NCBIfam" id="TIGR01786">
    <property type="entry name" value="TonB-hemlactrns"/>
    <property type="match status" value="1"/>
</dbReference>
<dbReference type="PANTHER" id="PTHR30442:SF0">
    <property type="entry name" value="FE(3+) DICITRATE TRANSPORT PROTEIN FECA"/>
    <property type="match status" value="1"/>
</dbReference>
<dbReference type="PANTHER" id="PTHR30442">
    <property type="entry name" value="IRON III DICITRATE TRANSPORT PROTEIN FECA"/>
    <property type="match status" value="1"/>
</dbReference>
<dbReference type="Pfam" id="PF07715">
    <property type="entry name" value="Plug"/>
    <property type="match status" value="1"/>
</dbReference>
<dbReference type="Pfam" id="PF00593">
    <property type="entry name" value="TonB_dep_Rec_b-barrel"/>
    <property type="match status" value="1"/>
</dbReference>
<dbReference type="SUPFAM" id="SSF56935">
    <property type="entry name" value="Porins"/>
    <property type="match status" value="1"/>
</dbReference>
<dbReference type="PROSITE" id="PS52016">
    <property type="entry name" value="TONB_DEPENDENT_REC_3"/>
    <property type="match status" value="1"/>
</dbReference>
<reference key="1">
    <citation type="journal article" date="1998" name="Infect. Immun.">
        <title>Cloning and characterization of tdhA, a locus encoding a TonB-dependent heme receptor from Haemophilus ducreyi.</title>
        <authorList>
            <person name="Thomas C.E."/>
            <person name="Olsen B."/>
            <person name="Elkins C."/>
        </authorList>
    </citation>
    <scope>NUCLEOTIDE SEQUENCE [GENOMIC DNA]</scope>
    <scope>FUNCTION</scope>
    <source>
        <strain>35000HP / ATCC 700724</strain>
    </source>
</reference>
<reference key="2">
    <citation type="submission" date="2003-06" db="EMBL/GenBank/DDBJ databases">
        <title>The complete genome sequence of Haemophilus ducreyi.</title>
        <authorList>
            <person name="Munson R.S. Jr."/>
            <person name="Ray W.C."/>
            <person name="Mahairas G."/>
            <person name="Sabo P."/>
            <person name="Mungur R."/>
            <person name="Johnson L."/>
            <person name="Nguyen D."/>
            <person name="Wang J."/>
            <person name="Forst C."/>
            <person name="Hood L."/>
        </authorList>
    </citation>
    <scope>NUCLEOTIDE SEQUENCE [LARGE SCALE GENOMIC DNA]</scope>
    <source>
        <strain>35000HP / ATCC 700724</strain>
    </source>
</reference>
<organism>
    <name type="scientific">Haemophilus ducreyi (strain 35000HP / ATCC 700724)</name>
    <dbReference type="NCBI Taxonomy" id="233412"/>
    <lineage>
        <taxon>Bacteria</taxon>
        <taxon>Pseudomonadati</taxon>
        <taxon>Pseudomonadota</taxon>
        <taxon>Gammaproteobacteria</taxon>
        <taxon>Pasteurellales</taxon>
        <taxon>Pasteurellaceae</taxon>
        <taxon>Haemophilus</taxon>
    </lineage>
</organism>